<name>COXM2_DANRE</name>
<gene>
    <name type="primary">cmc2</name>
    <name type="ORF">si:busm1-241h12.4</name>
    <name type="ORF">si:dkey-220e7.3-001</name>
    <name type="ORF">si:dz241h12.4-001</name>
</gene>
<organism>
    <name type="scientific">Danio rerio</name>
    <name type="common">Zebrafish</name>
    <name type="synonym">Brachydanio rerio</name>
    <dbReference type="NCBI Taxonomy" id="7955"/>
    <lineage>
        <taxon>Eukaryota</taxon>
        <taxon>Metazoa</taxon>
        <taxon>Chordata</taxon>
        <taxon>Craniata</taxon>
        <taxon>Vertebrata</taxon>
        <taxon>Euteleostomi</taxon>
        <taxon>Actinopterygii</taxon>
        <taxon>Neopterygii</taxon>
        <taxon>Teleostei</taxon>
        <taxon>Ostariophysi</taxon>
        <taxon>Cypriniformes</taxon>
        <taxon>Danionidae</taxon>
        <taxon>Danioninae</taxon>
        <taxon>Danio</taxon>
    </lineage>
</organism>
<reference key="1">
    <citation type="journal article" date="2013" name="Nature">
        <title>The zebrafish reference genome sequence and its relationship to the human genome.</title>
        <authorList>
            <person name="Howe K."/>
            <person name="Clark M.D."/>
            <person name="Torroja C.F."/>
            <person name="Torrance J."/>
            <person name="Berthelot C."/>
            <person name="Muffato M."/>
            <person name="Collins J.E."/>
            <person name="Humphray S."/>
            <person name="McLaren K."/>
            <person name="Matthews L."/>
            <person name="McLaren S."/>
            <person name="Sealy I."/>
            <person name="Caccamo M."/>
            <person name="Churcher C."/>
            <person name="Scott C."/>
            <person name="Barrett J.C."/>
            <person name="Koch R."/>
            <person name="Rauch G.J."/>
            <person name="White S."/>
            <person name="Chow W."/>
            <person name="Kilian B."/>
            <person name="Quintais L.T."/>
            <person name="Guerra-Assuncao J.A."/>
            <person name="Zhou Y."/>
            <person name="Gu Y."/>
            <person name="Yen J."/>
            <person name="Vogel J.H."/>
            <person name="Eyre T."/>
            <person name="Redmond S."/>
            <person name="Banerjee R."/>
            <person name="Chi J."/>
            <person name="Fu B."/>
            <person name="Langley E."/>
            <person name="Maguire S.F."/>
            <person name="Laird G.K."/>
            <person name="Lloyd D."/>
            <person name="Kenyon E."/>
            <person name="Donaldson S."/>
            <person name="Sehra H."/>
            <person name="Almeida-King J."/>
            <person name="Loveland J."/>
            <person name="Trevanion S."/>
            <person name="Jones M."/>
            <person name="Quail M."/>
            <person name="Willey D."/>
            <person name="Hunt A."/>
            <person name="Burton J."/>
            <person name="Sims S."/>
            <person name="McLay K."/>
            <person name="Plumb B."/>
            <person name="Davis J."/>
            <person name="Clee C."/>
            <person name="Oliver K."/>
            <person name="Clark R."/>
            <person name="Riddle C."/>
            <person name="Elliot D."/>
            <person name="Threadgold G."/>
            <person name="Harden G."/>
            <person name="Ware D."/>
            <person name="Begum S."/>
            <person name="Mortimore B."/>
            <person name="Kerry G."/>
            <person name="Heath P."/>
            <person name="Phillimore B."/>
            <person name="Tracey A."/>
            <person name="Corby N."/>
            <person name="Dunn M."/>
            <person name="Johnson C."/>
            <person name="Wood J."/>
            <person name="Clark S."/>
            <person name="Pelan S."/>
            <person name="Griffiths G."/>
            <person name="Smith M."/>
            <person name="Glithero R."/>
            <person name="Howden P."/>
            <person name="Barker N."/>
            <person name="Lloyd C."/>
            <person name="Stevens C."/>
            <person name="Harley J."/>
            <person name="Holt K."/>
            <person name="Panagiotidis G."/>
            <person name="Lovell J."/>
            <person name="Beasley H."/>
            <person name="Henderson C."/>
            <person name="Gordon D."/>
            <person name="Auger K."/>
            <person name="Wright D."/>
            <person name="Collins J."/>
            <person name="Raisen C."/>
            <person name="Dyer L."/>
            <person name="Leung K."/>
            <person name="Robertson L."/>
            <person name="Ambridge K."/>
            <person name="Leongamornlert D."/>
            <person name="McGuire S."/>
            <person name="Gilderthorp R."/>
            <person name="Griffiths C."/>
            <person name="Manthravadi D."/>
            <person name="Nichol S."/>
            <person name="Barker G."/>
            <person name="Whitehead S."/>
            <person name="Kay M."/>
            <person name="Brown J."/>
            <person name="Murnane C."/>
            <person name="Gray E."/>
            <person name="Humphries M."/>
            <person name="Sycamore N."/>
            <person name="Barker D."/>
            <person name="Saunders D."/>
            <person name="Wallis J."/>
            <person name="Babbage A."/>
            <person name="Hammond S."/>
            <person name="Mashreghi-Mohammadi M."/>
            <person name="Barr L."/>
            <person name="Martin S."/>
            <person name="Wray P."/>
            <person name="Ellington A."/>
            <person name="Matthews N."/>
            <person name="Ellwood M."/>
            <person name="Woodmansey R."/>
            <person name="Clark G."/>
            <person name="Cooper J."/>
            <person name="Tromans A."/>
            <person name="Grafham D."/>
            <person name="Skuce C."/>
            <person name="Pandian R."/>
            <person name="Andrews R."/>
            <person name="Harrison E."/>
            <person name="Kimberley A."/>
            <person name="Garnett J."/>
            <person name="Fosker N."/>
            <person name="Hall R."/>
            <person name="Garner P."/>
            <person name="Kelly D."/>
            <person name="Bird C."/>
            <person name="Palmer S."/>
            <person name="Gehring I."/>
            <person name="Berger A."/>
            <person name="Dooley C.M."/>
            <person name="Ersan-Urun Z."/>
            <person name="Eser C."/>
            <person name="Geiger H."/>
            <person name="Geisler M."/>
            <person name="Karotki L."/>
            <person name="Kirn A."/>
            <person name="Konantz J."/>
            <person name="Konantz M."/>
            <person name="Oberlander M."/>
            <person name="Rudolph-Geiger S."/>
            <person name="Teucke M."/>
            <person name="Lanz C."/>
            <person name="Raddatz G."/>
            <person name="Osoegawa K."/>
            <person name="Zhu B."/>
            <person name="Rapp A."/>
            <person name="Widaa S."/>
            <person name="Langford C."/>
            <person name="Yang F."/>
            <person name="Schuster S.C."/>
            <person name="Carter N.P."/>
            <person name="Harrow J."/>
            <person name="Ning Z."/>
            <person name="Herrero J."/>
            <person name="Searle S.M."/>
            <person name="Enright A."/>
            <person name="Geisler R."/>
            <person name="Plasterk R.H."/>
            <person name="Lee C."/>
            <person name="Westerfield M."/>
            <person name="de Jong P.J."/>
            <person name="Zon L.I."/>
            <person name="Postlethwait J.H."/>
            <person name="Nusslein-Volhard C."/>
            <person name="Hubbard T.J."/>
            <person name="Roest Crollius H."/>
            <person name="Rogers J."/>
            <person name="Stemple D.L."/>
        </authorList>
    </citation>
    <scope>NUCLEOTIDE SEQUENCE [LARGE SCALE GENOMIC DNA]</scope>
    <source>
        <strain>Tuebingen</strain>
    </source>
</reference>
<reference key="2">
    <citation type="submission" date="2004-07" db="EMBL/GenBank/DDBJ databases">
        <authorList>
            <consortium name="NIH - Zebrafish Gene Collection (ZGC) project"/>
        </authorList>
    </citation>
    <scope>NUCLEOTIDE SEQUENCE [LARGE SCALE MRNA]</scope>
</reference>
<comment type="function">
    <text evidence="1">May be involved in cytochrome c oxidase biogenesis.</text>
</comment>
<comment type="subcellular location">
    <subcellularLocation>
        <location evidence="1">Mitochondrion</location>
    </subcellularLocation>
</comment>
<comment type="similarity">
    <text evidence="4">Belongs to the CMC family.</text>
</comment>
<accession>Q6DHJ6</accession>
<accession>Q801T8</accession>
<proteinExistence type="inferred from homology"/>
<feature type="chain" id="PRO_0000365089" description="COX assembly mitochondrial protein 2 homolog">
    <location>
        <begin position="1"/>
        <end position="78"/>
    </location>
</feature>
<feature type="domain" description="CHCH" evidence="2">
    <location>
        <begin position="11"/>
        <end position="55"/>
    </location>
</feature>
<feature type="region of interest" description="Disordered" evidence="3">
    <location>
        <begin position="52"/>
        <end position="78"/>
    </location>
</feature>
<feature type="short sequence motif" description="Cx9C motif 1" evidence="2">
    <location>
        <begin position="14"/>
        <end position="24"/>
    </location>
</feature>
<feature type="short sequence motif" description="Cx9C motif 2" evidence="2">
    <location>
        <begin position="37"/>
        <end position="47"/>
    </location>
</feature>
<feature type="disulfide bond" evidence="2">
    <location>
        <begin position="14"/>
        <end position="47"/>
    </location>
</feature>
<feature type="disulfide bond" evidence="2">
    <location>
        <begin position="24"/>
        <end position="37"/>
    </location>
</feature>
<evidence type="ECO:0000250" key="1"/>
<evidence type="ECO:0000255" key="2">
    <source>
        <dbReference type="PROSITE-ProRule" id="PRU01150"/>
    </source>
</evidence>
<evidence type="ECO:0000256" key="3">
    <source>
        <dbReference type="SAM" id="MobiDB-lite"/>
    </source>
</evidence>
<evidence type="ECO:0000305" key="4"/>
<sequence length="78" mass="9480">MHPDLSPHLHTDECNQLITLLKQCHKEHNVLKFFGTCNDMDRAMRECLRKEYQTKRERSKAHAEEMRRRLKEQPKEHP</sequence>
<protein>
    <recommendedName>
        <fullName>COX assembly mitochondrial protein 2 homolog</fullName>
    </recommendedName>
</protein>
<keyword id="KW-1015">Disulfide bond</keyword>
<keyword id="KW-0496">Mitochondrion</keyword>
<keyword id="KW-1185">Reference proteome</keyword>
<dbReference type="EMBL" id="BX908800">
    <property type="protein sequence ID" value="CAK05454.1"/>
    <property type="molecule type" value="Genomic_DNA"/>
</dbReference>
<dbReference type="EMBL" id="AL592048">
    <property type="protein sequence ID" value="CAD87824.1"/>
    <property type="molecule type" value="Genomic_DNA"/>
</dbReference>
<dbReference type="EMBL" id="BC075976">
    <property type="protein sequence ID" value="AAH75976.1"/>
    <property type="molecule type" value="mRNA"/>
</dbReference>
<dbReference type="RefSeq" id="NP_001002614.1">
    <property type="nucleotide sequence ID" value="NM_001002614.2"/>
</dbReference>
<dbReference type="RefSeq" id="NP_001269068.1">
    <property type="nucleotide sequence ID" value="NM_001282139.1"/>
</dbReference>
<dbReference type="SMR" id="Q6DHJ6"/>
<dbReference type="FunCoup" id="Q6DHJ6">
    <property type="interactions" value="436"/>
</dbReference>
<dbReference type="STRING" id="7955.ENSDARP00000118380"/>
<dbReference type="PaxDb" id="7955-ENSDARP00000118380"/>
<dbReference type="Ensembl" id="ENSDART00000064076">
    <property type="protein sequence ID" value="ENSDARP00000064075"/>
    <property type="gene ID" value="ENSDARG00000043635"/>
</dbReference>
<dbReference type="Ensembl" id="ENSDART00000138533">
    <property type="protein sequence ID" value="ENSDARP00000118380"/>
    <property type="gene ID" value="ENSDARG00000043635"/>
</dbReference>
<dbReference type="Ensembl" id="ENSDART00000191303">
    <property type="protein sequence ID" value="ENSDARP00000147638"/>
    <property type="gene ID" value="ENSDARG00000043635"/>
</dbReference>
<dbReference type="GeneID" id="368857"/>
<dbReference type="KEGG" id="dre:368857"/>
<dbReference type="AGR" id="ZFIN:ZDB-GENE-030616-409"/>
<dbReference type="CTD" id="56942"/>
<dbReference type="ZFIN" id="ZDB-GENE-030616-409">
    <property type="gene designation" value="cmc2"/>
</dbReference>
<dbReference type="eggNOG" id="KOG4148">
    <property type="taxonomic scope" value="Eukaryota"/>
</dbReference>
<dbReference type="HOGENOM" id="CLU_169286_2_0_1"/>
<dbReference type="InParanoid" id="Q6DHJ6"/>
<dbReference type="OMA" id="HSEKPIG"/>
<dbReference type="OrthoDB" id="532630at2759"/>
<dbReference type="PhylomeDB" id="Q6DHJ6"/>
<dbReference type="TreeFam" id="TF314049"/>
<dbReference type="PRO" id="PR:Q6DHJ6"/>
<dbReference type="Proteomes" id="UP000000437">
    <property type="component" value="Chromosome 18"/>
</dbReference>
<dbReference type="Bgee" id="ENSDARG00000043635">
    <property type="expression patterns" value="Expressed in heart and 24 other cell types or tissues"/>
</dbReference>
<dbReference type="GO" id="GO:0005739">
    <property type="term" value="C:mitochondrion"/>
    <property type="evidence" value="ECO:0000318"/>
    <property type="project" value="GO_Central"/>
</dbReference>
<dbReference type="InterPro" id="IPR013892">
    <property type="entry name" value="Cyt_c_biogenesis_Cmc1-like"/>
</dbReference>
<dbReference type="PANTHER" id="PTHR22977">
    <property type="entry name" value="COX ASSEMBLY MITOCHONDRIAL PROTEIN"/>
    <property type="match status" value="1"/>
</dbReference>
<dbReference type="PANTHER" id="PTHR22977:SF1">
    <property type="entry name" value="COX ASSEMBLY MITOCHONDRIAL PROTEIN 2 HOMOLOG"/>
    <property type="match status" value="1"/>
</dbReference>
<dbReference type="Pfam" id="PF08583">
    <property type="entry name" value="Cmc1"/>
    <property type="match status" value="1"/>
</dbReference>
<dbReference type="PROSITE" id="PS51808">
    <property type="entry name" value="CHCH"/>
    <property type="match status" value="1"/>
</dbReference>